<feature type="chain" id="PRO_1000140424" description="4-hydroxy-2-oxo-heptane-1,7-dioate aldolase">
    <location>
        <begin position="1"/>
        <end position="263"/>
    </location>
</feature>
<feature type="active site" description="Proton acceptor" evidence="1">
    <location>
        <position position="45"/>
    </location>
</feature>
<feature type="binding site" evidence="1">
    <location>
        <position position="147"/>
    </location>
    <ligand>
        <name>substrate</name>
    </ligand>
</feature>
<feature type="binding site" evidence="1">
    <location>
        <position position="149"/>
    </location>
    <ligand>
        <name>a divalent metal cation</name>
        <dbReference type="ChEBI" id="CHEBI:60240"/>
    </ligand>
</feature>
<feature type="binding site" evidence="1">
    <location>
        <position position="174"/>
    </location>
    <ligand>
        <name>substrate</name>
    </ligand>
</feature>
<feature type="binding site" evidence="1">
    <location>
        <position position="175"/>
    </location>
    <ligand>
        <name>a divalent metal cation</name>
        <dbReference type="ChEBI" id="CHEBI:60240"/>
    </ligand>
</feature>
<feature type="binding site" evidence="1">
    <location>
        <position position="175"/>
    </location>
    <ligand>
        <name>substrate</name>
    </ligand>
</feature>
<feature type="site" description="Transition state stabilizer" evidence="1">
    <location>
        <position position="70"/>
    </location>
</feature>
<feature type="site" description="Increases basicity of active site His" evidence="1">
    <location>
        <position position="84"/>
    </location>
</feature>
<gene>
    <name evidence="1" type="primary">hpcH</name>
    <name evidence="1" type="synonym">hpaI</name>
    <name type="ordered locus">SeHA_C1216</name>
</gene>
<accession>B4TEM9</accession>
<dbReference type="EC" id="4.1.2.52" evidence="1"/>
<dbReference type="EMBL" id="CP001120">
    <property type="protein sequence ID" value="ACF67277.1"/>
    <property type="molecule type" value="Genomic_DNA"/>
</dbReference>
<dbReference type="RefSeq" id="WP_000785073.1">
    <property type="nucleotide sequence ID" value="NC_011083.1"/>
</dbReference>
<dbReference type="SMR" id="B4TEM9"/>
<dbReference type="KEGG" id="seh:SeHA_C1216"/>
<dbReference type="HOGENOM" id="CLU_059964_1_0_6"/>
<dbReference type="UniPathway" id="UPA00208">
    <property type="reaction ID" value="UER00422"/>
</dbReference>
<dbReference type="Proteomes" id="UP000001866">
    <property type="component" value="Chromosome"/>
</dbReference>
<dbReference type="GO" id="GO:0005737">
    <property type="term" value="C:cytoplasm"/>
    <property type="evidence" value="ECO:0007669"/>
    <property type="project" value="TreeGrafter"/>
</dbReference>
<dbReference type="GO" id="GO:0043863">
    <property type="term" value="F:4-hydroxy-2-ketopimelate aldolase activity"/>
    <property type="evidence" value="ECO:0007669"/>
    <property type="project" value="RHEA"/>
</dbReference>
<dbReference type="GO" id="GO:0046872">
    <property type="term" value="F:metal ion binding"/>
    <property type="evidence" value="ECO:0007669"/>
    <property type="project" value="UniProtKB-UniRule"/>
</dbReference>
<dbReference type="GO" id="GO:1901023">
    <property type="term" value="P:4-hydroxyphenylacetate catabolic process"/>
    <property type="evidence" value="ECO:0007669"/>
    <property type="project" value="UniProtKB-UniRule"/>
</dbReference>
<dbReference type="GO" id="GO:0010124">
    <property type="term" value="P:phenylacetate catabolic process"/>
    <property type="evidence" value="ECO:0007669"/>
    <property type="project" value="InterPro"/>
</dbReference>
<dbReference type="FunFam" id="3.20.20.60:FF:000004">
    <property type="entry name" value="5-keto-4-deoxy-D-glucarate aldolase"/>
    <property type="match status" value="1"/>
</dbReference>
<dbReference type="Gene3D" id="3.20.20.60">
    <property type="entry name" value="Phosphoenolpyruvate-binding domains"/>
    <property type="match status" value="1"/>
</dbReference>
<dbReference type="HAMAP" id="MF_01292">
    <property type="entry name" value="HKHD_aldolase"/>
    <property type="match status" value="1"/>
</dbReference>
<dbReference type="InterPro" id="IPR005000">
    <property type="entry name" value="Aldolase/citrate-lyase_domain"/>
</dbReference>
<dbReference type="InterPro" id="IPR023701">
    <property type="entry name" value="HKHD_aldolase_ent"/>
</dbReference>
<dbReference type="InterPro" id="IPR012689">
    <property type="entry name" value="HpaI"/>
</dbReference>
<dbReference type="InterPro" id="IPR050251">
    <property type="entry name" value="HpcH-HpaI_aldolase"/>
</dbReference>
<dbReference type="InterPro" id="IPR015813">
    <property type="entry name" value="Pyrv/PenolPyrv_kinase-like_dom"/>
</dbReference>
<dbReference type="InterPro" id="IPR040442">
    <property type="entry name" value="Pyrv_kinase-like_dom_sf"/>
</dbReference>
<dbReference type="NCBIfam" id="TIGR02311">
    <property type="entry name" value="HpaI"/>
    <property type="match status" value="1"/>
</dbReference>
<dbReference type="PANTHER" id="PTHR30502">
    <property type="entry name" value="2-KETO-3-DEOXY-L-RHAMNONATE ALDOLASE"/>
    <property type="match status" value="1"/>
</dbReference>
<dbReference type="PANTHER" id="PTHR30502:SF0">
    <property type="entry name" value="PHOSPHOENOLPYRUVATE CARBOXYLASE FAMILY PROTEIN"/>
    <property type="match status" value="1"/>
</dbReference>
<dbReference type="Pfam" id="PF03328">
    <property type="entry name" value="HpcH_HpaI"/>
    <property type="match status" value="1"/>
</dbReference>
<dbReference type="SUPFAM" id="SSF51621">
    <property type="entry name" value="Phosphoenolpyruvate/pyruvate domain"/>
    <property type="match status" value="1"/>
</dbReference>
<comment type="function">
    <text evidence="1">Catalyzes the reversible retro-aldol cleavage of 4-hydroxy-2-ketoheptane-1,7-dioate (HKHD) to pyruvate and succinic semialdehyde.</text>
</comment>
<comment type="catalytic activity">
    <reaction evidence="1">
        <text>4-hydroxy-2-oxoheptanedioate = succinate semialdehyde + pyruvate</text>
        <dbReference type="Rhea" id="RHEA:25788"/>
        <dbReference type="ChEBI" id="CHEBI:15361"/>
        <dbReference type="ChEBI" id="CHEBI:57706"/>
        <dbReference type="ChEBI" id="CHEBI:73036"/>
        <dbReference type="EC" id="4.1.2.52"/>
    </reaction>
</comment>
<comment type="cofactor">
    <cofactor evidence="1">
        <name>a divalent metal cation</name>
        <dbReference type="ChEBI" id="CHEBI:60240"/>
    </cofactor>
    <text evidence="1">Binds 1 divalent metal cation per subunit.</text>
</comment>
<comment type="pathway">
    <text evidence="1">Aromatic compound metabolism; 4-hydroxyphenylacetate degradation; pyruvate and succinate semialdehyde from 4-hydroxyphenylacetate: step 7/7.</text>
</comment>
<comment type="subunit">
    <text evidence="1">Homohexamer; trimer of dimers.</text>
</comment>
<comment type="similarity">
    <text evidence="1">Belongs to the HpcH/HpaI aldolase family.</text>
</comment>
<organism>
    <name type="scientific">Salmonella heidelberg (strain SL476)</name>
    <dbReference type="NCBI Taxonomy" id="454169"/>
    <lineage>
        <taxon>Bacteria</taxon>
        <taxon>Pseudomonadati</taxon>
        <taxon>Pseudomonadota</taxon>
        <taxon>Gammaproteobacteria</taxon>
        <taxon>Enterobacterales</taxon>
        <taxon>Enterobacteriaceae</taxon>
        <taxon>Salmonella</taxon>
    </lineage>
</organism>
<sequence>MKNAFKDALKAGRPQIGLWLGLANSYSAELLAGAGFDWLLIDGEHAPNNVQTVLTQLQAIAPYPSQPVVRPSWNDPVQIKQLLDVGAQTLLIPMVQNADEARNAVAATRYPPAGIRGVGSALARASRWNRIPNYLHQANDAMCVLVQIETREAMSNLASILDVDGIDGVFIGPADLSADMGFAGNPQHPEVQAAIENAIVQIRAAGKAPGILMANEALAKRYLELGALFVAVGVDTTLLARGAEALAARFGAEKKLSGASGVY</sequence>
<evidence type="ECO:0000255" key="1">
    <source>
        <dbReference type="HAMAP-Rule" id="MF_01292"/>
    </source>
</evidence>
<proteinExistence type="inferred from homology"/>
<reference key="1">
    <citation type="journal article" date="2011" name="J. Bacteriol.">
        <title>Comparative genomics of 28 Salmonella enterica isolates: evidence for CRISPR-mediated adaptive sublineage evolution.</title>
        <authorList>
            <person name="Fricke W.F."/>
            <person name="Mammel M.K."/>
            <person name="McDermott P.F."/>
            <person name="Tartera C."/>
            <person name="White D.G."/>
            <person name="Leclerc J.E."/>
            <person name="Ravel J."/>
            <person name="Cebula T.A."/>
        </authorList>
    </citation>
    <scope>NUCLEOTIDE SEQUENCE [LARGE SCALE GENOMIC DNA]</scope>
    <source>
        <strain>SL476</strain>
    </source>
</reference>
<keyword id="KW-0058">Aromatic hydrocarbons catabolism</keyword>
<keyword id="KW-0456">Lyase</keyword>
<keyword id="KW-0479">Metal-binding</keyword>
<name>HPCH_SALHS</name>
<protein>
    <recommendedName>
        <fullName evidence="1">4-hydroxy-2-oxo-heptane-1,7-dioate aldolase</fullName>
        <ecNumber evidence="1">4.1.2.52</ecNumber>
    </recommendedName>
    <alternativeName>
        <fullName evidence="1">2,4-dihydroxyhept-2-ene-1,7-dioic acid aldolase</fullName>
        <shortName evidence="1">HHED aldolase</shortName>
    </alternativeName>
    <alternativeName>
        <fullName evidence="1">4-hydroxy-2-ketoheptane-1,7-dioate aldolase</fullName>
        <shortName evidence="1">HKHD aldolase</shortName>
    </alternativeName>
</protein>